<sequence>MDLGMTMAGFLRGLWCVVGTSVCAQTLQEAPAHFLLEGTDFAARVLRMSISARNVPSYWFEEGVWSEAPSASSRLPAKNKSTPGVPRRVTRALPRVKPDVFVFGNEHETVFWGQLNTIEHARYVVHRAVHPLDAHAHERYYEPLLKRFHFYCLEGRTPITSVSLCLFALDVSTRLIWAYALPSQVEMVWGTCIPRAWIPLEMHSHVRARYPKAKFYQFDPIGFVDSEGKVVLYPWALEQHAQRPQDFLVYEPQQGDWEQVASQTGPGHSPYRAM</sequence>
<proteinExistence type="predicted"/>
<reference key="1">
    <citation type="journal article" date="1998" name="Science">
        <title>Complete genome sequence of Treponema pallidum, the syphilis spirochete.</title>
        <authorList>
            <person name="Fraser C.M."/>
            <person name="Norris S.J."/>
            <person name="Weinstock G.M."/>
            <person name="White O."/>
            <person name="Sutton G.G."/>
            <person name="Dodson R.J."/>
            <person name="Gwinn M.L."/>
            <person name="Hickey E.K."/>
            <person name="Clayton R.A."/>
            <person name="Ketchum K.A."/>
            <person name="Sodergren E."/>
            <person name="Hardham J.M."/>
            <person name="McLeod M.P."/>
            <person name="Salzberg S.L."/>
            <person name="Peterson J.D."/>
            <person name="Khalak H.G."/>
            <person name="Richardson D.L."/>
            <person name="Howell J.K."/>
            <person name="Chidambaram M."/>
            <person name="Utterback T.R."/>
            <person name="McDonald L.A."/>
            <person name="Artiach P."/>
            <person name="Bowman C."/>
            <person name="Cotton M.D."/>
            <person name="Fujii C."/>
            <person name="Garland S.A."/>
            <person name="Hatch B."/>
            <person name="Horst K."/>
            <person name="Roberts K.M."/>
            <person name="Sandusky M."/>
            <person name="Weidman J.F."/>
            <person name="Smith H.O."/>
            <person name="Venter J.C."/>
        </authorList>
    </citation>
    <scope>NUCLEOTIDE SEQUENCE [LARGE SCALE GENOMIC DNA]</scope>
    <source>
        <strain>Nichols</strain>
    </source>
</reference>
<name>Y629_TREPA</name>
<protein>
    <recommendedName>
        <fullName>Uncharacterized protein TP_0629</fullName>
    </recommendedName>
</protein>
<feature type="chain" id="PRO_0000202292" description="Uncharacterized protein TP_0629">
    <location>
        <begin position="1"/>
        <end position="274"/>
    </location>
</feature>
<organism>
    <name type="scientific">Treponema pallidum (strain Nichols)</name>
    <dbReference type="NCBI Taxonomy" id="243276"/>
    <lineage>
        <taxon>Bacteria</taxon>
        <taxon>Pseudomonadati</taxon>
        <taxon>Spirochaetota</taxon>
        <taxon>Spirochaetia</taxon>
        <taxon>Spirochaetales</taxon>
        <taxon>Treponemataceae</taxon>
        <taxon>Treponema</taxon>
    </lineage>
</organism>
<accession>O83637</accession>
<dbReference type="EMBL" id="AE000520">
    <property type="protein sequence ID" value="AAC65612.1"/>
    <property type="molecule type" value="Genomic_DNA"/>
</dbReference>
<dbReference type="PIR" id="C71300">
    <property type="entry name" value="C71300"/>
</dbReference>
<dbReference type="IntAct" id="O83637">
    <property type="interactions" value="6"/>
</dbReference>
<dbReference type="STRING" id="243276.TP_0629"/>
<dbReference type="EnsemblBacteria" id="AAC65612">
    <property type="protein sequence ID" value="AAC65612"/>
    <property type="gene ID" value="TP_0629"/>
</dbReference>
<dbReference type="KEGG" id="tpa:TP_0629"/>
<dbReference type="KEGG" id="tpw:TPANIC_0629"/>
<dbReference type="eggNOG" id="ENOG5031C7C">
    <property type="taxonomic scope" value="Bacteria"/>
</dbReference>
<dbReference type="HOGENOM" id="CLU_1030316_0_0_12"/>
<dbReference type="Proteomes" id="UP000000811">
    <property type="component" value="Chromosome"/>
</dbReference>
<gene>
    <name type="ordered locus">TP_0629</name>
</gene>
<keyword id="KW-1185">Reference proteome</keyword>